<evidence type="ECO:0000255" key="1">
    <source>
        <dbReference type="HAMAP-Rule" id="MF_00207"/>
    </source>
</evidence>
<proteinExistence type="inferred from homology"/>
<keyword id="KW-0963">Cytoplasm</keyword>
<keyword id="KW-0378">Hydrolase</keyword>
<keyword id="KW-0464">Manganese</keyword>
<keyword id="KW-0479">Metal-binding</keyword>
<keyword id="KW-1185">Reference proteome</keyword>
<sequence>MVKTVIFGHKNPDTDTICSSIAYADLKTKLGHEVAPVRLGEVNLETQFALDKFNIHAPELIERVEDGAEVILVDHNEFQQSVDNIENATIREVIDHHRISNFETKEPLYFRAEPVGCTATILNKMYKENDISVDKNIAGILLSAIISDSLLLKSPTCTEEDVQAAHELAEIAGVDLESYGLDMLKAGADLSDKTVKDLITMDAKEFAMGNAKVEIAQVNAVDTNEIYKLHDKLVEVITSRINDNDLDLFLFVVTDILNNDSEVLAIGNGKDKVNAAFNVTLDSTNRALLKGVVSRKKQIVTVLTEQFK</sequence>
<feature type="chain" id="PRO_0000158578" description="Probable manganese-dependent inorganic pyrophosphatase">
    <location>
        <begin position="1"/>
        <end position="308"/>
    </location>
</feature>
<feature type="binding site" evidence="1">
    <location>
        <position position="9"/>
    </location>
    <ligand>
        <name>Mn(2+)</name>
        <dbReference type="ChEBI" id="CHEBI:29035"/>
        <label>1</label>
    </ligand>
</feature>
<feature type="binding site" evidence="1">
    <location>
        <position position="13"/>
    </location>
    <ligand>
        <name>Mn(2+)</name>
        <dbReference type="ChEBI" id="CHEBI:29035"/>
        <label>1</label>
    </ligand>
</feature>
<feature type="binding site" evidence="1">
    <location>
        <position position="15"/>
    </location>
    <ligand>
        <name>Mn(2+)</name>
        <dbReference type="ChEBI" id="CHEBI:29035"/>
        <label>2</label>
    </ligand>
</feature>
<feature type="binding site" evidence="1">
    <location>
        <position position="74"/>
    </location>
    <ligand>
        <name>Mn(2+)</name>
        <dbReference type="ChEBI" id="CHEBI:29035"/>
        <label>1</label>
    </ligand>
</feature>
<feature type="binding site" evidence="1">
    <location>
        <position position="74"/>
    </location>
    <ligand>
        <name>Mn(2+)</name>
        <dbReference type="ChEBI" id="CHEBI:29035"/>
        <label>2</label>
    </ligand>
</feature>
<feature type="binding site" evidence="1">
    <location>
        <position position="96"/>
    </location>
    <ligand>
        <name>Mn(2+)</name>
        <dbReference type="ChEBI" id="CHEBI:29035"/>
        <label>2</label>
    </ligand>
</feature>
<feature type="binding site" evidence="1">
    <location>
        <position position="148"/>
    </location>
    <ligand>
        <name>Mn(2+)</name>
        <dbReference type="ChEBI" id="CHEBI:29035"/>
        <label>2</label>
    </ligand>
</feature>
<name>PPAC_OCEIH</name>
<dbReference type="EC" id="3.6.1.1" evidence="1"/>
<dbReference type="EMBL" id="BA000028">
    <property type="protein sequence ID" value="BAC12974.1"/>
    <property type="molecule type" value="Genomic_DNA"/>
</dbReference>
<dbReference type="RefSeq" id="WP_011065420.1">
    <property type="nucleotide sequence ID" value="NC_004193.1"/>
</dbReference>
<dbReference type="SMR" id="Q8CUT9"/>
<dbReference type="STRING" id="221109.gene:10733256"/>
<dbReference type="KEGG" id="oih:OB1018"/>
<dbReference type="eggNOG" id="COG1227">
    <property type="taxonomic scope" value="Bacteria"/>
</dbReference>
<dbReference type="HOGENOM" id="CLU_025243_0_1_9"/>
<dbReference type="OrthoDB" id="9766150at2"/>
<dbReference type="PhylomeDB" id="Q8CUT9"/>
<dbReference type="Proteomes" id="UP000000822">
    <property type="component" value="Chromosome"/>
</dbReference>
<dbReference type="GO" id="GO:0005737">
    <property type="term" value="C:cytoplasm"/>
    <property type="evidence" value="ECO:0007669"/>
    <property type="project" value="UniProtKB-SubCell"/>
</dbReference>
<dbReference type="GO" id="GO:0004427">
    <property type="term" value="F:inorganic diphosphate phosphatase activity"/>
    <property type="evidence" value="ECO:0007669"/>
    <property type="project" value="UniProtKB-UniRule"/>
</dbReference>
<dbReference type="GO" id="GO:0030145">
    <property type="term" value="F:manganese ion binding"/>
    <property type="evidence" value="ECO:0007669"/>
    <property type="project" value="UniProtKB-UniRule"/>
</dbReference>
<dbReference type="FunFam" id="3.10.310.20:FF:000001">
    <property type="entry name" value="Probable manganese-dependent inorganic pyrophosphatase"/>
    <property type="match status" value="1"/>
</dbReference>
<dbReference type="FunFam" id="3.90.1640.10:FF:000001">
    <property type="entry name" value="Probable manganese-dependent inorganic pyrophosphatase"/>
    <property type="match status" value="1"/>
</dbReference>
<dbReference type="Gene3D" id="3.10.310.20">
    <property type="entry name" value="DHHA2 domain"/>
    <property type="match status" value="1"/>
</dbReference>
<dbReference type="Gene3D" id="3.90.1640.10">
    <property type="entry name" value="inorganic pyrophosphatase (n-terminal core)"/>
    <property type="match status" value="1"/>
</dbReference>
<dbReference type="HAMAP" id="MF_00207">
    <property type="entry name" value="PPase_C"/>
    <property type="match status" value="1"/>
</dbReference>
<dbReference type="InterPro" id="IPR001667">
    <property type="entry name" value="DDH_dom"/>
</dbReference>
<dbReference type="InterPro" id="IPR038763">
    <property type="entry name" value="DHH_sf"/>
</dbReference>
<dbReference type="InterPro" id="IPR004097">
    <property type="entry name" value="DHHA2"/>
</dbReference>
<dbReference type="InterPro" id="IPR038222">
    <property type="entry name" value="DHHA2_dom_sf"/>
</dbReference>
<dbReference type="InterPro" id="IPR022934">
    <property type="entry name" value="Mn-dep_inorganic_PyrPase"/>
</dbReference>
<dbReference type="NCBIfam" id="NF003877">
    <property type="entry name" value="PRK05427.1"/>
    <property type="match status" value="1"/>
</dbReference>
<dbReference type="PANTHER" id="PTHR12112">
    <property type="entry name" value="BNIP - RELATED"/>
    <property type="match status" value="1"/>
</dbReference>
<dbReference type="PANTHER" id="PTHR12112:SF22">
    <property type="entry name" value="MANGANESE-DEPENDENT INORGANIC PYROPHOSPHATASE-RELATED"/>
    <property type="match status" value="1"/>
</dbReference>
<dbReference type="Pfam" id="PF01368">
    <property type="entry name" value="DHH"/>
    <property type="match status" value="1"/>
</dbReference>
<dbReference type="Pfam" id="PF02833">
    <property type="entry name" value="DHHA2"/>
    <property type="match status" value="1"/>
</dbReference>
<dbReference type="SMART" id="SM01131">
    <property type="entry name" value="DHHA2"/>
    <property type="match status" value="1"/>
</dbReference>
<dbReference type="SUPFAM" id="SSF64182">
    <property type="entry name" value="DHH phosphoesterases"/>
    <property type="match status" value="1"/>
</dbReference>
<gene>
    <name evidence="1" type="primary">ppaC</name>
    <name type="ordered locus">OB1018</name>
</gene>
<organism>
    <name type="scientific">Oceanobacillus iheyensis (strain DSM 14371 / CIP 107618 / JCM 11309 / KCTC 3954 / HTE831)</name>
    <dbReference type="NCBI Taxonomy" id="221109"/>
    <lineage>
        <taxon>Bacteria</taxon>
        <taxon>Bacillati</taxon>
        <taxon>Bacillota</taxon>
        <taxon>Bacilli</taxon>
        <taxon>Bacillales</taxon>
        <taxon>Bacillaceae</taxon>
        <taxon>Oceanobacillus</taxon>
    </lineage>
</organism>
<accession>Q8CUT9</accession>
<comment type="catalytic activity">
    <reaction evidence="1">
        <text>diphosphate + H2O = 2 phosphate + H(+)</text>
        <dbReference type="Rhea" id="RHEA:24576"/>
        <dbReference type="ChEBI" id="CHEBI:15377"/>
        <dbReference type="ChEBI" id="CHEBI:15378"/>
        <dbReference type="ChEBI" id="CHEBI:33019"/>
        <dbReference type="ChEBI" id="CHEBI:43474"/>
        <dbReference type="EC" id="3.6.1.1"/>
    </reaction>
</comment>
<comment type="cofactor">
    <cofactor evidence="1">
        <name>Mn(2+)</name>
        <dbReference type="ChEBI" id="CHEBI:29035"/>
    </cofactor>
    <text evidence="1">Binds 2 manganese ions per subunit.</text>
</comment>
<comment type="subcellular location">
    <subcellularLocation>
        <location evidence="1">Cytoplasm</location>
    </subcellularLocation>
</comment>
<comment type="similarity">
    <text evidence="1">Belongs to the PPase class C family.</text>
</comment>
<protein>
    <recommendedName>
        <fullName evidence="1">Probable manganese-dependent inorganic pyrophosphatase</fullName>
        <ecNumber evidence="1">3.6.1.1</ecNumber>
    </recommendedName>
    <alternativeName>
        <fullName evidence="1">Pyrophosphate phospho-hydrolase</fullName>
        <shortName evidence="1">PPase</shortName>
    </alternativeName>
</protein>
<reference key="1">
    <citation type="journal article" date="2002" name="Nucleic Acids Res.">
        <title>Genome sequence of Oceanobacillus iheyensis isolated from the Iheya Ridge and its unexpected adaptive capabilities to extreme environments.</title>
        <authorList>
            <person name="Takami H."/>
            <person name="Takaki Y."/>
            <person name="Uchiyama I."/>
        </authorList>
    </citation>
    <scope>NUCLEOTIDE SEQUENCE [LARGE SCALE GENOMIC DNA]</scope>
    <source>
        <strain>DSM 14371 / CIP 107618 / JCM 11309 / KCTC 3954 / HTE831</strain>
    </source>
</reference>